<accession>C1KVC7</accession>
<reference key="1">
    <citation type="journal article" date="2012" name="BMC Genomics">
        <title>Comparative genomics and transcriptomics of lineages I, II, and III strains of Listeria monocytogenes.</title>
        <authorList>
            <person name="Hain T."/>
            <person name="Ghai R."/>
            <person name="Billion A."/>
            <person name="Kuenne C.T."/>
            <person name="Steinweg C."/>
            <person name="Izar B."/>
            <person name="Mohamed W."/>
            <person name="Mraheil M."/>
            <person name="Domann E."/>
            <person name="Schaffrath S."/>
            <person name="Karst U."/>
            <person name="Goesmann A."/>
            <person name="Oehm S."/>
            <person name="Puhler A."/>
            <person name="Merkl R."/>
            <person name="Vorwerk S."/>
            <person name="Glaser P."/>
            <person name="Garrido P."/>
            <person name="Rusniok C."/>
            <person name="Buchrieser C."/>
            <person name="Goebel W."/>
            <person name="Chakraborty T."/>
        </authorList>
    </citation>
    <scope>NUCLEOTIDE SEQUENCE [LARGE SCALE GENOMIC DNA]</scope>
    <source>
        <strain>CLIP80459</strain>
    </source>
</reference>
<sequence length="84" mass="9169">MPNIKSAIKRVKTAETRNSRNASQRSAMRTAIKKFDEAAANNADNAKDLYVEASKKLDSAVSKGLIHKNNAARNKSRLAAKLAK</sequence>
<proteinExistence type="inferred from homology"/>
<name>RS20_LISMC</name>
<gene>
    <name evidence="1" type="primary">rpsT</name>
    <name type="ordered locus">Lm4b_01490</name>
</gene>
<keyword id="KW-0687">Ribonucleoprotein</keyword>
<keyword id="KW-0689">Ribosomal protein</keyword>
<keyword id="KW-0694">RNA-binding</keyword>
<keyword id="KW-0699">rRNA-binding</keyword>
<feature type="chain" id="PRO_1000206504" description="Small ribosomal subunit protein bS20">
    <location>
        <begin position="1"/>
        <end position="84"/>
    </location>
</feature>
<feature type="region of interest" description="Disordered" evidence="2">
    <location>
        <begin position="1"/>
        <end position="28"/>
    </location>
</feature>
<protein>
    <recommendedName>
        <fullName evidence="1">Small ribosomal subunit protein bS20</fullName>
    </recommendedName>
    <alternativeName>
        <fullName evidence="3">30S ribosomal protein S20</fullName>
    </alternativeName>
</protein>
<comment type="function">
    <text evidence="1">Binds directly to 16S ribosomal RNA.</text>
</comment>
<comment type="similarity">
    <text evidence="1">Belongs to the bacterial ribosomal protein bS20 family.</text>
</comment>
<evidence type="ECO:0000255" key="1">
    <source>
        <dbReference type="HAMAP-Rule" id="MF_00500"/>
    </source>
</evidence>
<evidence type="ECO:0000256" key="2">
    <source>
        <dbReference type="SAM" id="MobiDB-lite"/>
    </source>
</evidence>
<evidence type="ECO:0000305" key="3"/>
<dbReference type="EMBL" id="FM242711">
    <property type="protein sequence ID" value="CAS05252.1"/>
    <property type="molecule type" value="Genomic_DNA"/>
</dbReference>
<dbReference type="RefSeq" id="WP_003726526.1">
    <property type="nucleotide sequence ID" value="NC_012488.1"/>
</dbReference>
<dbReference type="SMR" id="C1KVC7"/>
<dbReference type="GeneID" id="93239357"/>
<dbReference type="KEGG" id="lmc:Lm4b_01490"/>
<dbReference type="HOGENOM" id="CLU_160655_1_0_9"/>
<dbReference type="GO" id="GO:0005829">
    <property type="term" value="C:cytosol"/>
    <property type="evidence" value="ECO:0007669"/>
    <property type="project" value="TreeGrafter"/>
</dbReference>
<dbReference type="GO" id="GO:0015935">
    <property type="term" value="C:small ribosomal subunit"/>
    <property type="evidence" value="ECO:0007669"/>
    <property type="project" value="TreeGrafter"/>
</dbReference>
<dbReference type="GO" id="GO:0070181">
    <property type="term" value="F:small ribosomal subunit rRNA binding"/>
    <property type="evidence" value="ECO:0007669"/>
    <property type="project" value="TreeGrafter"/>
</dbReference>
<dbReference type="GO" id="GO:0003735">
    <property type="term" value="F:structural constituent of ribosome"/>
    <property type="evidence" value="ECO:0007669"/>
    <property type="project" value="InterPro"/>
</dbReference>
<dbReference type="GO" id="GO:0006412">
    <property type="term" value="P:translation"/>
    <property type="evidence" value="ECO:0007669"/>
    <property type="project" value="UniProtKB-UniRule"/>
</dbReference>
<dbReference type="FunFam" id="1.20.58.110:FF:000001">
    <property type="entry name" value="30S ribosomal protein S20"/>
    <property type="match status" value="1"/>
</dbReference>
<dbReference type="Gene3D" id="1.20.58.110">
    <property type="entry name" value="Ribosomal protein S20"/>
    <property type="match status" value="1"/>
</dbReference>
<dbReference type="HAMAP" id="MF_00500">
    <property type="entry name" value="Ribosomal_bS20"/>
    <property type="match status" value="1"/>
</dbReference>
<dbReference type="InterPro" id="IPR002583">
    <property type="entry name" value="Ribosomal_bS20"/>
</dbReference>
<dbReference type="InterPro" id="IPR036510">
    <property type="entry name" value="Ribosomal_bS20_sf"/>
</dbReference>
<dbReference type="NCBIfam" id="TIGR00029">
    <property type="entry name" value="S20"/>
    <property type="match status" value="1"/>
</dbReference>
<dbReference type="PANTHER" id="PTHR33398">
    <property type="entry name" value="30S RIBOSOMAL PROTEIN S20"/>
    <property type="match status" value="1"/>
</dbReference>
<dbReference type="PANTHER" id="PTHR33398:SF1">
    <property type="entry name" value="SMALL RIBOSOMAL SUBUNIT PROTEIN BS20C"/>
    <property type="match status" value="1"/>
</dbReference>
<dbReference type="Pfam" id="PF01649">
    <property type="entry name" value="Ribosomal_S20p"/>
    <property type="match status" value="1"/>
</dbReference>
<dbReference type="SUPFAM" id="SSF46992">
    <property type="entry name" value="Ribosomal protein S20"/>
    <property type="match status" value="1"/>
</dbReference>
<organism>
    <name type="scientific">Listeria monocytogenes serotype 4b (strain CLIP80459)</name>
    <dbReference type="NCBI Taxonomy" id="568819"/>
    <lineage>
        <taxon>Bacteria</taxon>
        <taxon>Bacillati</taxon>
        <taxon>Bacillota</taxon>
        <taxon>Bacilli</taxon>
        <taxon>Bacillales</taxon>
        <taxon>Listeriaceae</taxon>
        <taxon>Listeria</taxon>
    </lineage>
</organism>